<feature type="chain" id="PRO_1000186679" description="4-hydroxybenzoate octaprenyltransferase">
    <location>
        <begin position="1"/>
        <end position="296"/>
    </location>
</feature>
<feature type="transmembrane region" description="Helical" evidence="1">
    <location>
        <begin position="29"/>
        <end position="49"/>
    </location>
</feature>
<feature type="transmembrane region" description="Helical" evidence="1">
    <location>
        <begin position="55"/>
        <end position="75"/>
    </location>
</feature>
<feature type="transmembrane region" description="Helical" evidence="1">
    <location>
        <begin position="102"/>
        <end position="122"/>
    </location>
</feature>
<feature type="transmembrane region" description="Helical" evidence="1">
    <location>
        <begin position="146"/>
        <end position="166"/>
    </location>
</feature>
<feature type="transmembrane region" description="Helical" evidence="1">
    <location>
        <begin position="169"/>
        <end position="189"/>
    </location>
</feature>
<feature type="transmembrane region" description="Helical" evidence="1">
    <location>
        <begin position="219"/>
        <end position="239"/>
    </location>
</feature>
<feature type="transmembrane region" description="Helical" evidence="1">
    <location>
        <begin position="241"/>
        <end position="261"/>
    </location>
</feature>
<feature type="transmembrane region" description="Helical" evidence="1">
    <location>
        <begin position="275"/>
        <end position="295"/>
    </location>
</feature>
<keyword id="KW-0997">Cell inner membrane</keyword>
<keyword id="KW-1003">Cell membrane</keyword>
<keyword id="KW-0460">Magnesium</keyword>
<keyword id="KW-0472">Membrane</keyword>
<keyword id="KW-0808">Transferase</keyword>
<keyword id="KW-0812">Transmembrane</keyword>
<keyword id="KW-1133">Transmembrane helix</keyword>
<keyword id="KW-0831">Ubiquinone biosynthesis</keyword>
<comment type="function">
    <text evidence="1">Catalyzes the prenylation of para-hydroxybenzoate (PHB) with an all-trans polyprenyl group. Mediates the second step in the final reaction sequence of ubiquinone-8 (UQ-8) biosynthesis, which is the condensation of the polyisoprenoid side chain with PHB, generating the first membrane-bound Q intermediate 3-octaprenyl-4-hydroxybenzoate.</text>
</comment>
<comment type="catalytic activity">
    <reaction evidence="1">
        <text>all-trans-octaprenyl diphosphate + 4-hydroxybenzoate = 4-hydroxy-3-(all-trans-octaprenyl)benzoate + diphosphate</text>
        <dbReference type="Rhea" id="RHEA:27782"/>
        <dbReference type="ChEBI" id="CHEBI:1617"/>
        <dbReference type="ChEBI" id="CHEBI:17879"/>
        <dbReference type="ChEBI" id="CHEBI:33019"/>
        <dbReference type="ChEBI" id="CHEBI:57711"/>
        <dbReference type="EC" id="2.5.1.39"/>
    </reaction>
</comment>
<comment type="cofactor">
    <cofactor evidence="1">
        <name>Mg(2+)</name>
        <dbReference type="ChEBI" id="CHEBI:18420"/>
    </cofactor>
</comment>
<comment type="pathway">
    <text evidence="1">Cofactor biosynthesis; ubiquinone biosynthesis.</text>
</comment>
<comment type="subcellular location">
    <subcellularLocation>
        <location evidence="1">Cell inner membrane</location>
        <topology evidence="1">Multi-pass membrane protein</topology>
    </subcellularLocation>
</comment>
<comment type="similarity">
    <text evidence="1">Belongs to the UbiA prenyltransferase family.</text>
</comment>
<accession>B7V5P9</accession>
<dbReference type="EC" id="2.5.1.39" evidence="1"/>
<dbReference type="EMBL" id="FM209186">
    <property type="protein sequence ID" value="CAW30507.1"/>
    <property type="molecule type" value="Genomic_DNA"/>
</dbReference>
<dbReference type="RefSeq" id="WP_003104612.1">
    <property type="nucleotide sequence ID" value="NC_011770.1"/>
</dbReference>
<dbReference type="SMR" id="B7V5P9"/>
<dbReference type="KEGG" id="pag:PLES_57531"/>
<dbReference type="HOGENOM" id="CLU_034879_1_0_6"/>
<dbReference type="UniPathway" id="UPA00232"/>
<dbReference type="GO" id="GO:0005886">
    <property type="term" value="C:plasma membrane"/>
    <property type="evidence" value="ECO:0007669"/>
    <property type="project" value="UniProtKB-SubCell"/>
</dbReference>
<dbReference type="GO" id="GO:0008412">
    <property type="term" value="F:4-hydroxybenzoate polyprenyltransferase activity"/>
    <property type="evidence" value="ECO:0007669"/>
    <property type="project" value="UniProtKB-UniRule"/>
</dbReference>
<dbReference type="GO" id="GO:0006744">
    <property type="term" value="P:ubiquinone biosynthetic process"/>
    <property type="evidence" value="ECO:0007669"/>
    <property type="project" value="UniProtKB-UniRule"/>
</dbReference>
<dbReference type="CDD" id="cd13959">
    <property type="entry name" value="PT_UbiA_COQ2"/>
    <property type="match status" value="1"/>
</dbReference>
<dbReference type="FunFam" id="1.10.357.140:FF:000002">
    <property type="entry name" value="4-hydroxybenzoate octaprenyltransferase"/>
    <property type="match status" value="1"/>
</dbReference>
<dbReference type="FunFam" id="1.20.120.1780:FF:000001">
    <property type="entry name" value="4-hydroxybenzoate octaprenyltransferase"/>
    <property type="match status" value="1"/>
</dbReference>
<dbReference type="Gene3D" id="1.10.357.140">
    <property type="entry name" value="UbiA prenyltransferase"/>
    <property type="match status" value="1"/>
</dbReference>
<dbReference type="Gene3D" id="1.20.120.1780">
    <property type="entry name" value="UbiA prenyltransferase"/>
    <property type="match status" value="1"/>
</dbReference>
<dbReference type="HAMAP" id="MF_01635">
    <property type="entry name" value="UbiA"/>
    <property type="match status" value="1"/>
</dbReference>
<dbReference type="InterPro" id="IPR006370">
    <property type="entry name" value="HB_polyprenyltransferase-like"/>
</dbReference>
<dbReference type="InterPro" id="IPR039653">
    <property type="entry name" value="Prenyltransferase"/>
</dbReference>
<dbReference type="InterPro" id="IPR000537">
    <property type="entry name" value="UbiA_prenyltransferase"/>
</dbReference>
<dbReference type="InterPro" id="IPR030470">
    <property type="entry name" value="UbiA_prenylTrfase_CS"/>
</dbReference>
<dbReference type="InterPro" id="IPR044878">
    <property type="entry name" value="UbiA_sf"/>
</dbReference>
<dbReference type="NCBIfam" id="TIGR01474">
    <property type="entry name" value="ubiA_proteo"/>
    <property type="match status" value="1"/>
</dbReference>
<dbReference type="PANTHER" id="PTHR11048:SF28">
    <property type="entry name" value="4-HYDROXYBENZOATE POLYPRENYLTRANSFERASE, MITOCHONDRIAL"/>
    <property type="match status" value="1"/>
</dbReference>
<dbReference type="PANTHER" id="PTHR11048">
    <property type="entry name" value="PRENYLTRANSFERASES"/>
    <property type="match status" value="1"/>
</dbReference>
<dbReference type="Pfam" id="PF01040">
    <property type="entry name" value="UbiA"/>
    <property type="match status" value="1"/>
</dbReference>
<dbReference type="PROSITE" id="PS00943">
    <property type="entry name" value="UBIA"/>
    <property type="match status" value="1"/>
</dbReference>
<gene>
    <name evidence="1" type="primary">ubiA</name>
    <name type="ordered locus">PLES_57531</name>
</gene>
<evidence type="ECO:0000255" key="1">
    <source>
        <dbReference type="HAMAP-Rule" id="MF_01635"/>
    </source>
</evidence>
<protein>
    <recommendedName>
        <fullName evidence="1">4-hydroxybenzoate octaprenyltransferase</fullName>
        <ecNumber evidence="1">2.5.1.39</ecNumber>
    </recommendedName>
    <alternativeName>
        <fullName evidence="1">4-HB polyprenyltransferase</fullName>
    </alternativeName>
</protein>
<organism>
    <name type="scientific">Pseudomonas aeruginosa (strain LESB58)</name>
    <dbReference type="NCBI Taxonomy" id="557722"/>
    <lineage>
        <taxon>Bacteria</taxon>
        <taxon>Pseudomonadati</taxon>
        <taxon>Pseudomonadota</taxon>
        <taxon>Gammaproteobacteria</taxon>
        <taxon>Pseudomonadales</taxon>
        <taxon>Pseudomonadaceae</taxon>
        <taxon>Pseudomonas</taxon>
    </lineage>
</organism>
<sequence length="296" mass="33017">MFVTLIKPLARLHPRAWDFVQLVRLDRPIGIYLLLWPTLWSLWIAADGVPELKNLLIFVLGVILMRAAGCVINDFADRNFDGHVARTKARPLATGKISVREAWITFAVLVALSFGLVLLTNATTVWLSFGAVAVASLYPFMKRYTYYPQVVLGAAYSWGILMAFTAERGELPASAWLLFLANVLWTVAYDSYYAMTDREDDLKIGIKSTAILFGDADRLIIGSLQGLTLLLLVLAGNRFELGLCFYLGLAVAAACFVWEAWSTRDRDPQACFRAFLHNHWAGLAIFLGTVADYALR</sequence>
<reference key="1">
    <citation type="journal article" date="2009" name="Genome Res.">
        <title>Newly introduced genomic prophage islands are critical determinants of in vivo competitiveness in the Liverpool epidemic strain of Pseudomonas aeruginosa.</title>
        <authorList>
            <person name="Winstanley C."/>
            <person name="Langille M.G.I."/>
            <person name="Fothergill J.L."/>
            <person name="Kukavica-Ibrulj I."/>
            <person name="Paradis-Bleau C."/>
            <person name="Sanschagrin F."/>
            <person name="Thomson N.R."/>
            <person name="Winsor G.L."/>
            <person name="Quail M.A."/>
            <person name="Lennard N."/>
            <person name="Bignell A."/>
            <person name="Clarke L."/>
            <person name="Seeger K."/>
            <person name="Saunders D."/>
            <person name="Harris D."/>
            <person name="Parkhill J."/>
            <person name="Hancock R.E.W."/>
            <person name="Brinkman F.S.L."/>
            <person name="Levesque R.C."/>
        </authorList>
    </citation>
    <scope>NUCLEOTIDE SEQUENCE [LARGE SCALE GENOMIC DNA]</scope>
    <source>
        <strain>LESB58</strain>
    </source>
</reference>
<proteinExistence type="inferred from homology"/>
<name>UBIA_PSEA8</name>